<evidence type="ECO:0000250" key="1">
    <source>
        <dbReference type="UniProtKB" id="P68871"/>
    </source>
</evidence>
<evidence type="ECO:0000255" key="2">
    <source>
        <dbReference type="PROSITE-ProRule" id="PRU00238"/>
    </source>
</evidence>
<evidence type="ECO:0000269" key="3">
    <source ref="1"/>
</evidence>
<sequence length="147" mass="16117">MSFLSAEEKNLVSGLWGKVNVDEVGGEALGRLLVVYPWTQRFFQSFGDLSSADAIMSNAKVKAHGKKVLNSFSDGLKNIDDLKGAFAKLSELHCDKLHVDPENFRLLGNVLVCVLAHHFGHEFNPQVQAAFQKVVAGVASALAHRYH</sequence>
<gene>
    <name type="primary">HBB</name>
</gene>
<keyword id="KW-0007">Acetylation</keyword>
<keyword id="KW-0903">Direct protein sequencing</keyword>
<keyword id="KW-0349">Heme</keyword>
<keyword id="KW-0408">Iron</keyword>
<keyword id="KW-0479">Metal-binding</keyword>
<keyword id="KW-0561">Oxygen transport</keyword>
<keyword id="KW-0597">Phosphoprotein</keyword>
<keyword id="KW-0702">S-nitrosylation</keyword>
<keyword id="KW-0813">Transport</keyword>
<reference key="1">
    <citation type="journal article" date="1985" name="J. Protein Chem.">
        <title>The primary structure of haemoglobin from amur-leopard (Panthera pardus orientalis).</title>
        <authorList>
            <person name="Abbasi A."/>
            <person name="Braunitzer G."/>
        </authorList>
    </citation>
    <scope>PROTEIN SEQUENCE OF 2-147</scope>
    <scope>ACETYLATION AT SER-2</scope>
</reference>
<dbReference type="PIR" id="A02373">
    <property type="entry name" value="HBPD"/>
</dbReference>
<dbReference type="SMR" id="P04244"/>
<dbReference type="GO" id="GO:0072562">
    <property type="term" value="C:blood microparticle"/>
    <property type="evidence" value="ECO:0007669"/>
    <property type="project" value="TreeGrafter"/>
</dbReference>
<dbReference type="GO" id="GO:0031838">
    <property type="term" value="C:haptoglobin-hemoglobin complex"/>
    <property type="evidence" value="ECO:0007669"/>
    <property type="project" value="TreeGrafter"/>
</dbReference>
<dbReference type="GO" id="GO:0005833">
    <property type="term" value="C:hemoglobin complex"/>
    <property type="evidence" value="ECO:0007669"/>
    <property type="project" value="InterPro"/>
</dbReference>
<dbReference type="GO" id="GO:0031720">
    <property type="term" value="F:haptoglobin binding"/>
    <property type="evidence" value="ECO:0007669"/>
    <property type="project" value="TreeGrafter"/>
</dbReference>
<dbReference type="GO" id="GO:0020037">
    <property type="term" value="F:heme binding"/>
    <property type="evidence" value="ECO:0007669"/>
    <property type="project" value="InterPro"/>
</dbReference>
<dbReference type="GO" id="GO:0031721">
    <property type="term" value="F:hemoglobin alpha binding"/>
    <property type="evidence" value="ECO:0007669"/>
    <property type="project" value="TreeGrafter"/>
</dbReference>
<dbReference type="GO" id="GO:0046872">
    <property type="term" value="F:metal ion binding"/>
    <property type="evidence" value="ECO:0007669"/>
    <property type="project" value="UniProtKB-KW"/>
</dbReference>
<dbReference type="GO" id="GO:0043177">
    <property type="term" value="F:organic acid binding"/>
    <property type="evidence" value="ECO:0007669"/>
    <property type="project" value="TreeGrafter"/>
</dbReference>
<dbReference type="GO" id="GO:0019825">
    <property type="term" value="F:oxygen binding"/>
    <property type="evidence" value="ECO:0007669"/>
    <property type="project" value="InterPro"/>
</dbReference>
<dbReference type="GO" id="GO:0005344">
    <property type="term" value="F:oxygen carrier activity"/>
    <property type="evidence" value="ECO:0007669"/>
    <property type="project" value="UniProtKB-KW"/>
</dbReference>
<dbReference type="GO" id="GO:0004601">
    <property type="term" value="F:peroxidase activity"/>
    <property type="evidence" value="ECO:0007669"/>
    <property type="project" value="TreeGrafter"/>
</dbReference>
<dbReference type="GO" id="GO:0042744">
    <property type="term" value="P:hydrogen peroxide catabolic process"/>
    <property type="evidence" value="ECO:0007669"/>
    <property type="project" value="TreeGrafter"/>
</dbReference>
<dbReference type="CDD" id="cd08925">
    <property type="entry name" value="Hb-beta-like"/>
    <property type="match status" value="1"/>
</dbReference>
<dbReference type="FunFam" id="1.10.490.10:FF:000001">
    <property type="entry name" value="Hemoglobin subunit beta"/>
    <property type="match status" value="1"/>
</dbReference>
<dbReference type="Gene3D" id="1.10.490.10">
    <property type="entry name" value="Globins"/>
    <property type="match status" value="1"/>
</dbReference>
<dbReference type="InterPro" id="IPR000971">
    <property type="entry name" value="Globin"/>
</dbReference>
<dbReference type="InterPro" id="IPR009050">
    <property type="entry name" value="Globin-like_sf"/>
</dbReference>
<dbReference type="InterPro" id="IPR012292">
    <property type="entry name" value="Globin/Proto"/>
</dbReference>
<dbReference type="InterPro" id="IPR002337">
    <property type="entry name" value="Hemoglobin_b"/>
</dbReference>
<dbReference type="InterPro" id="IPR050056">
    <property type="entry name" value="Hemoglobin_oxygen_transport"/>
</dbReference>
<dbReference type="PANTHER" id="PTHR11442">
    <property type="entry name" value="HEMOGLOBIN FAMILY MEMBER"/>
    <property type="match status" value="1"/>
</dbReference>
<dbReference type="PANTHER" id="PTHR11442:SF42">
    <property type="entry name" value="HEMOGLOBIN SUBUNIT BETA"/>
    <property type="match status" value="1"/>
</dbReference>
<dbReference type="Pfam" id="PF00042">
    <property type="entry name" value="Globin"/>
    <property type="match status" value="1"/>
</dbReference>
<dbReference type="PRINTS" id="PR00814">
    <property type="entry name" value="BETAHAEM"/>
</dbReference>
<dbReference type="SUPFAM" id="SSF46458">
    <property type="entry name" value="Globin-like"/>
    <property type="match status" value="1"/>
</dbReference>
<dbReference type="PROSITE" id="PS01033">
    <property type="entry name" value="GLOBIN"/>
    <property type="match status" value="1"/>
</dbReference>
<proteinExistence type="evidence at protein level"/>
<organism>
    <name type="scientific">Panthera pardus orientalis</name>
    <name type="common">Amur leopard</name>
    <name type="synonym">Felis orientalis</name>
    <dbReference type="NCBI Taxonomy" id="9692"/>
    <lineage>
        <taxon>Eukaryota</taxon>
        <taxon>Metazoa</taxon>
        <taxon>Chordata</taxon>
        <taxon>Craniata</taxon>
        <taxon>Vertebrata</taxon>
        <taxon>Euteleostomi</taxon>
        <taxon>Mammalia</taxon>
        <taxon>Eutheria</taxon>
        <taxon>Laurasiatheria</taxon>
        <taxon>Carnivora</taxon>
        <taxon>Feliformia</taxon>
        <taxon>Felidae</taxon>
        <taxon>Pantherinae</taxon>
        <taxon>Panthera</taxon>
    </lineage>
</organism>
<name>HBB_PANPO</name>
<feature type="initiator methionine" description="Removed" evidence="3">
    <location>
        <position position="1"/>
    </location>
</feature>
<feature type="chain" id="PRO_0000053057" description="Hemoglobin subunit beta">
    <location>
        <begin position="2"/>
        <end position="147"/>
    </location>
</feature>
<feature type="domain" description="Globin" evidence="2">
    <location>
        <begin position="3"/>
        <end position="147"/>
    </location>
</feature>
<feature type="binding site" description="distal binding residue">
    <location>
        <position position="64"/>
    </location>
    <ligand>
        <name>heme b</name>
        <dbReference type="ChEBI" id="CHEBI:60344"/>
    </ligand>
    <ligandPart>
        <name>Fe</name>
        <dbReference type="ChEBI" id="CHEBI:18248"/>
    </ligandPart>
</feature>
<feature type="binding site" description="proximal binding residue">
    <location>
        <position position="93"/>
    </location>
    <ligand>
        <name>heme b</name>
        <dbReference type="ChEBI" id="CHEBI:60344"/>
    </ligand>
    <ligandPart>
        <name>Fe</name>
        <dbReference type="ChEBI" id="CHEBI:18248"/>
    </ligandPart>
</feature>
<feature type="modified residue" description="N-acetylserine" evidence="3">
    <location>
        <position position="2"/>
    </location>
</feature>
<feature type="modified residue" description="Phosphoserine" evidence="1">
    <location>
        <position position="45"/>
    </location>
</feature>
<feature type="modified residue" description="N6-acetyllysine" evidence="1">
    <location>
        <position position="60"/>
    </location>
</feature>
<feature type="modified residue" description="N6-acetyllysine" evidence="1">
    <location>
        <position position="83"/>
    </location>
</feature>
<feature type="modified residue" description="S-nitrosocysteine" evidence="1">
    <location>
        <position position="94"/>
    </location>
</feature>
<protein>
    <recommendedName>
        <fullName>Hemoglobin subunit beta</fullName>
    </recommendedName>
    <alternativeName>
        <fullName>Beta-globin</fullName>
    </alternativeName>
    <alternativeName>
        <fullName>Hemoglobin beta chain</fullName>
    </alternativeName>
</protein>
<comment type="function">
    <text>Involved in oxygen transport from the lung to the various peripheral tissues.</text>
</comment>
<comment type="subunit">
    <text>Heterotetramer of two alpha chains and two beta chains.</text>
</comment>
<comment type="tissue specificity">
    <text>Red blood cells.</text>
</comment>
<comment type="miscellaneous">
    <text>In the cat family (felidae), the oxygen affinity of hemoglobin depends little or not at all on the association with diphosphoglycerate (DPG).</text>
</comment>
<comment type="similarity">
    <text evidence="2">Belongs to the globin family.</text>
</comment>
<accession>P04244</accession>